<keyword id="KW-0560">Oxidoreductase</keyword>
<keyword id="KW-1185">Reference proteome</keyword>
<name>GRDH_ORYSJ</name>
<feature type="chain" id="PRO_0000239260" description="Glucose and ribitol dehydrogenase homolog">
    <location>
        <begin position="1"/>
        <end position="300"/>
    </location>
</feature>
<feature type="region of interest" description="Disordered" evidence="3">
    <location>
        <begin position="1"/>
        <end position="23"/>
    </location>
</feature>
<feature type="compositionally biased region" description="Polar residues" evidence="3">
    <location>
        <begin position="1"/>
        <end position="14"/>
    </location>
</feature>
<feature type="active site" description="Proton acceptor" evidence="2">
    <location>
        <position position="205"/>
    </location>
</feature>
<feature type="binding site" evidence="1">
    <location>
        <begin position="44"/>
        <end position="68"/>
    </location>
    <ligand>
        <name>NAD(+)</name>
        <dbReference type="ChEBI" id="CHEBI:57540"/>
    </ligand>
</feature>
<feature type="binding site" evidence="1">
    <location>
        <position position="192"/>
    </location>
    <ligand>
        <name>substrate</name>
    </ligand>
</feature>
<reference key="1">
    <citation type="journal article" date="2005" name="Mol. Genet. Genomics">
        <title>A fine physical map of the rice chromosome 5.</title>
        <authorList>
            <person name="Cheng C.-H."/>
            <person name="Chung M.C."/>
            <person name="Liu S.-M."/>
            <person name="Chen S.-K."/>
            <person name="Kao F.Y."/>
            <person name="Lin S.-J."/>
            <person name="Hsiao S.-H."/>
            <person name="Tseng I.C."/>
            <person name="Hsing Y.-I.C."/>
            <person name="Wu H.-P."/>
            <person name="Chen C.-S."/>
            <person name="Shaw J.-F."/>
            <person name="Wu J."/>
            <person name="Matsumoto T."/>
            <person name="Sasaki T."/>
            <person name="Chen H.-C."/>
            <person name="Chow T.-Y."/>
        </authorList>
    </citation>
    <scope>NUCLEOTIDE SEQUENCE [LARGE SCALE GENOMIC DNA]</scope>
    <source>
        <strain>cv. Nipponbare</strain>
    </source>
</reference>
<reference key="2">
    <citation type="journal article" date="2005" name="Nature">
        <title>The map-based sequence of the rice genome.</title>
        <authorList>
            <consortium name="International rice genome sequencing project (IRGSP)"/>
        </authorList>
    </citation>
    <scope>NUCLEOTIDE SEQUENCE [LARGE SCALE GENOMIC DNA]</scope>
    <source>
        <strain>cv. Nipponbare</strain>
    </source>
</reference>
<reference key="3">
    <citation type="journal article" date="2013" name="Rice">
        <title>Improvement of the Oryza sativa Nipponbare reference genome using next generation sequence and optical map data.</title>
        <authorList>
            <person name="Kawahara Y."/>
            <person name="de la Bastide M."/>
            <person name="Hamilton J.P."/>
            <person name="Kanamori H."/>
            <person name="McCombie W.R."/>
            <person name="Ouyang S."/>
            <person name="Schwartz D.C."/>
            <person name="Tanaka T."/>
            <person name="Wu J."/>
            <person name="Zhou S."/>
            <person name="Childs K.L."/>
            <person name="Davidson R.M."/>
            <person name="Lin H."/>
            <person name="Quesada-Ocampo L."/>
            <person name="Vaillancourt B."/>
            <person name="Sakai H."/>
            <person name="Lee S.S."/>
            <person name="Kim J."/>
            <person name="Numa H."/>
            <person name="Itoh T."/>
            <person name="Buell C.R."/>
            <person name="Matsumoto T."/>
        </authorList>
    </citation>
    <scope>GENOME REANNOTATION</scope>
    <source>
        <strain>cv. Nipponbare</strain>
    </source>
</reference>
<reference key="4">
    <citation type="journal article" date="2003" name="Science">
        <title>Collection, mapping, and annotation of over 28,000 cDNA clones from japonica rice.</title>
        <authorList>
            <consortium name="The rice full-length cDNA consortium"/>
        </authorList>
    </citation>
    <scope>NUCLEOTIDE SEQUENCE [LARGE SCALE MRNA]</scope>
    <source>
        <strain>cv. Nipponbare</strain>
    </source>
</reference>
<accession>Q75KH3</accession>
<sequence>MASQQFPPQNQETQPGKEHAMDPRPEAIIQSYKPANKLKDKVAIVTGGDSGIGRAVCLCFALEGATVAFTYVKGQEEKDAEETLRALRDIRARTGAKDPMAIPADLGYDDNCRKVVDEVAGAYGGAIDILVNNAAEQYERPSITDITEDDLERVFRTNIFSYFFMSKHAVKRMRDRRGGAGAGGCSIINTSSINAYKGNKTLLDYTATKGAIVAFTRALALQLAEEGIRVNGVAPGPIWTPLIPASFAEEKVRQFGSQVPMGRAGQPSEVAPSFVFLASDDASYMSGQMLHVNGGVIVNG</sequence>
<evidence type="ECO:0000250" key="1"/>
<evidence type="ECO:0000255" key="2">
    <source>
        <dbReference type="PROSITE-ProRule" id="PRU10001"/>
    </source>
</evidence>
<evidence type="ECO:0000256" key="3">
    <source>
        <dbReference type="SAM" id="MobiDB-lite"/>
    </source>
</evidence>
<evidence type="ECO:0000305" key="4"/>
<comment type="function">
    <text evidence="1">May act as a short alcohol-polyol-sugar dehydrogenase possibly related to carbohydrate metabolism and the acquisition of desiccation tolerance. May also be involved in signal transduction (By similarity).</text>
</comment>
<comment type="similarity">
    <text evidence="4">Belongs to the short-chain dehydrogenases/reductases (SDR) family.</text>
</comment>
<comment type="sequence caution" evidence="4">
    <conflict type="erroneous initiation">
        <sequence resource="EMBL-CDS" id="AAS90638"/>
    </conflict>
</comment>
<comment type="sequence caution" evidence="4">
    <conflict type="erroneous initiation">
        <sequence resource="EMBL-CDS" id="AAU10779"/>
    </conflict>
</comment>
<dbReference type="EC" id="1.1.1.-"/>
<dbReference type="EMBL" id="AC105262">
    <property type="protein sequence ID" value="AAS90638.1"/>
    <property type="status" value="ALT_INIT"/>
    <property type="molecule type" value="Genomic_DNA"/>
</dbReference>
<dbReference type="EMBL" id="AC137621">
    <property type="protein sequence ID" value="AAU10779.1"/>
    <property type="status" value="ALT_INIT"/>
    <property type="molecule type" value="Genomic_DNA"/>
</dbReference>
<dbReference type="EMBL" id="AP014961">
    <property type="status" value="NOT_ANNOTATED_CDS"/>
    <property type="molecule type" value="Genomic_DNA"/>
</dbReference>
<dbReference type="EMBL" id="AK110652">
    <property type="status" value="NOT_ANNOTATED_CDS"/>
    <property type="molecule type" value="mRNA"/>
</dbReference>
<dbReference type="SMR" id="Q75KH3"/>
<dbReference type="FunCoup" id="Q75KH3">
    <property type="interactions" value="25"/>
</dbReference>
<dbReference type="STRING" id="39947.Q75KH3"/>
<dbReference type="PaxDb" id="39947-Q75KH3"/>
<dbReference type="eggNOG" id="KOG0725">
    <property type="taxonomic scope" value="Eukaryota"/>
</dbReference>
<dbReference type="InParanoid" id="Q75KH3"/>
<dbReference type="Proteomes" id="UP000000763">
    <property type="component" value="Chromosome 5"/>
</dbReference>
<dbReference type="Proteomes" id="UP000059680">
    <property type="component" value="Chromosome 5"/>
</dbReference>
<dbReference type="GO" id="GO:0016614">
    <property type="term" value="F:oxidoreductase activity, acting on CH-OH group of donors"/>
    <property type="evidence" value="ECO:0007669"/>
    <property type="project" value="UniProtKB-ARBA"/>
</dbReference>
<dbReference type="FunFam" id="3.40.50.720:FF:000084">
    <property type="entry name" value="Short-chain dehydrogenase reductase"/>
    <property type="match status" value="1"/>
</dbReference>
<dbReference type="Gene3D" id="3.40.50.720">
    <property type="entry name" value="NAD(P)-binding Rossmann-like Domain"/>
    <property type="match status" value="1"/>
</dbReference>
<dbReference type="InterPro" id="IPR036291">
    <property type="entry name" value="NAD(P)-bd_dom_sf"/>
</dbReference>
<dbReference type="InterPro" id="IPR020904">
    <property type="entry name" value="Sc_DH/Rdtase_CS"/>
</dbReference>
<dbReference type="InterPro" id="IPR002347">
    <property type="entry name" value="SDR_fam"/>
</dbReference>
<dbReference type="PANTHER" id="PTHR48107:SF16">
    <property type="entry name" value="NADPH-DEPENDENT ALDEHYDE REDUCTASE 1, CHLOROPLASTIC"/>
    <property type="match status" value="1"/>
</dbReference>
<dbReference type="PANTHER" id="PTHR48107">
    <property type="entry name" value="NADPH-DEPENDENT ALDEHYDE REDUCTASE-LIKE PROTEIN, CHLOROPLASTIC-RELATED"/>
    <property type="match status" value="1"/>
</dbReference>
<dbReference type="Pfam" id="PF13561">
    <property type="entry name" value="adh_short_C2"/>
    <property type="match status" value="1"/>
</dbReference>
<dbReference type="PRINTS" id="PR00081">
    <property type="entry name" value="GDHRDH"/>
</dbReference>
<dbReference type="PRINTS" id="PR00080">
    <property type="entry name" value="SDRFAMILY"/>
</dbReference>
<dbReference type="SUPFAM" id="SSF51735">
    <property type="entry name" value="NAD(P)-binding Rossmann-fold domains"/>
    <property type="match status" value="1"/>
</dbReference>
<dbReference type="PROSITE" id="PS00061">
    <property type="entry name" value="ADH_SHORT"/>
    <property type="match status" value="1"/>
</dbReference>
<gene>
    <name type="ordered locus">Os05g0140800</name>
    <name type="ordered locus">LOC_Os05g04870</name>
    <name type="ORF">OJ1489_G03.3</name>
    <name type="ORF">OSJNBb0111O13.13</name>
</gene>
<proteinExistence type="evidence at transcript level"/>
<protein>
    <recommendedName>
        <fullName>Glucose and ribitol dehydrogenase homolog</fullName>
        <ecNumber>1.1.1.-</ecNumber>
    </recommendedName>
</protein>
<organism>
    <name type="scientific">Oryza sativa subsp. japonica</name>
    <name type="common">Rice</name>
    <dbReference type="NCBI Taxonomy" id="39947"/>
    <lineage>
        <taxon>Eukaryota</taxon>
        <taxon>Viridiplantae</taxon>
        <taxon>Streptophyta</taxon>
        <taxon>Embryophyta</taxon>
        <taxon>Tracheophyta</taxon>
        <taxon>Spermatophyta</taxon>
        <taxon>Magnoliopsida</taxon>
        <taxon>Liliopsida</taxon>
        <taxon>Poales</taxon>
        <taxon>Poaceae</taxon>
        <taxon>BOP clade</taxon>
        <taxon>Oryzoideae</taxon>
        <taxon>Oryzeae</taxon>
        <taxon>Oryzinae</taxon>
        <taxon>Oryza</taxon>
        <taxon>Oryza sativa</taxon>
    </lineage>
</organism>